<sequence length="993" mass="111465">MATSSFNINELVASHGDKGLLATALVDKTAHEQLEEQLQHQRRGRKVYIRNVLGVKDSEVIRNRYGGKYDLHLTQQEFAPHGLAGALRLCETLDCLDSFPSSGLRQDLVLDFGGSWVTHYLRGHNVHCCSPCLGIRDKMRHAERLMNMRKIILNDPQQFDGRQPDFCTHPAADCKVQAHFAISIHGGYDMGFRGLCEAMNAHGTTILKGTMMFDGAMMFDDQGVIPELNCQWRKIRTAFSETEDATPLSEKLNSTIFSHVRKFKTMVAFDFINESTMSYVHDWENIKSFLTDQTYSYRGMTYGIERCVIHAGIMTYKIIGVPGMCPPELIRHCIWFPSIKDYVGLKIPASQDLVEWKTVRILTSTLRETEEIAMRCYNDKKAWMEQFKVILGVLSAKSSTIVINGMSMQSGERIDINDYHYIGFAILLHTKMKYEQLGKMYDMWNASYISKWFAALTRPLRVFFSSVVHALFPTLRPREEKEFLIKLSTFVTFNVECSFDGGEEWDVISSAAYVATQAVTDGKVLAAQKAEKLAEKLAQPVIEVSDRPEAPSSTPDDTADVCGKEQEVSELDSLSAQTRSPITRVAERATAMLEYAAYEKQLHDTTVSNLKRIWNMAGGDDKRNSLEGNLKFVFDTYFTVDPMVNIHFSTGRWMRPVPEGIVYSVGFNERGLGPKSDGELYIVNSECVICNSESLSTVTRSLQAPTGTISQVDGVAGCGKTTAIKSIFEPSTDMIVTANKKSAQDVRMALFKSSDSKEACTFVRTADSVLLNECPTVSRVLVDEVVLLHFGQLCAVMSKLKAVRAICFGDSEQIAFSSRDASFDMRFSKIIPDETSDADTTFRSPQDVVPLVRLMATKALPKGTHSKYTKWVSQSKVKRSVTSRAIASVTLVDLDSSRFYITMTQADKASLISRAKEMNLPKTFWNERIKTVHESQGISEDHVTLVRLKSTKCDLFKQFSYCLVALTRHKVTFRYEHCGVLNGDLIAECIARA</sequence>
<reference key="1">
    <citation type="journal article" date="1995" name="Arch. Virol.">
        <title>Complete genomic RNA sequences of cucumber mosaic virus strain NT9 from Taiwan.</title>
        <authorList>
            <person name="Hsu Y.-H."/>
            <person name="Wu C.W."/>
            <person name="Lin B.Y."/>
            <person name="Chen H.Y."/>
            <person name="Lee M.F."/>
            <person name="Tsai C.H."/>
        </authorList>
    </citation>
    <scope>NUCLEOTIDE SEQUENCE [GENOMIC RNA]</scope>
</reference>
<organismHost>
    <name type="scientific">Cucumis sativus</name>
    <name type="common">Cucumber</name>
    <dbReference type="NCBI Taxonomy" id="3659"/>
</organismHost>
<organismHost>
    <name type="scientific">Solanum lycopersicum</name>
    <name type="common">Tomato</name>
    <name type="synonym">Lycopersicon esculentum</name>
    <dbReference type="NCBI Taxonomy" id="4081"/>
</organismHost>
<organismHost>
    <name type="scientific">Spinacia oleracea</name>
    <name type="common">Spinach</name>
    <dbReference type="NCBI Taxonomy" id="3562"/>
</organismHost>
<evidence type="ECO:0000250" key="1"/>
<evidence type="ECO:0000255" key="2"/>
<evidence type="ECO:0000255" key="3">
    <source>
        <dbReference type="PROSITE-ProRule" id="PRU01079"/>
    </source>
</evidence>
<evidence type="ECO:0000256" key="4">
    <source>
        <dbReference type="SAM" id="MobiDB-lite"/>
    </source>
</evidence>
<evidence type="ECO:0000305" key="5"/>
<keyword id="KW-0067">ATP-binding</keyword>
<keyword id="KW-0347">Helicase</keyword>
<keyword id="KW-1038">Host endoplasmic reticulum</keyword>
<keyword id="KW-1043">Host membrane</keyword>
<keyword id="KW-0378">Hydrolase</keyword>
<keyword id="KW-0472">Membrane</keyword>
<keyword id="KW-0489">Methyltransferase</keyword>
<keyword id="KW-0547">Nucleotide-binding</keyword>
<keyword id="KW-0808">Transferase</keyword>
<proteinExistence type="inferred from homology"/>
<organism>
    <name type="scientific">Cucumber mosaic virus (strain NT9)</name>
    <name type="common">CMV</name>
    <dbReference type="NCBI Taxonomy" id="117124"/>
    <lineage>
        <taxon>Viruses</taxon>
        <taxon>Riboviria</taxon>
        <taxon>Orthornavirae</taxon>
        <taxon>Kitrinoviricota</taxon>
        <taxon>Alsuviricetes</taxon>
        <taxon>Martellivirales</taxon>
        <taxon>Bromoviridae</taxon>
        <taxon>Cucumovirus</taxon>
        <taxon>Cucumber mosaic virus</taxon>
    </lineage>
</organism>
<accession>O40976</accession>
<name>1A_CMVNT</name>
<feature type="chain" id="PRO_0000083261" description="Replication protein 1a">
    <location>
        <begin position="1"/>
        <end position="993"/>
    </location>
</feature>
<feature type="domain" description="Alphavirus-like MT" evidence="3">
    <location>
        <begin position="72"/>
        <end position="290"/>
    </location>
</feature>
<feature type="domain" description="(+)RNA virus helicase ATP-binding">
    <location>
        <begin position="687"/>
        <end position="838"/>
    </location>
</feature>
<feature type="domain" description="(+)RNA virus helicase C-terminal">
    <location>
        <begin position="839"/>
        <end position="993"/>
    </location>
</feature>
<feature type="region of interest" description="Methyltransferase">
    <location>
        <begin position="51"/>
        <end position="409"/>
    </location>
</feature>
<feature type="region of interest" description="Disordered" evidence="4">
    <location>
        <begin position="545"/>
        <end position="576"/>
    </location>
</feature>
<feature type="region of interest" description="ATP-dependent helicase">
    <location>
        <begin position="712"/>
        <end position="975"/>
    </location>
</feature>
<feature type="binding site" evidence="2">
    <location>
        <begin position="714"/>
        <end position="721"/>
    </location>
    <ligand>
        <name>ATP</name>
        <dbReference type="ChEBI" id="CHEBI:30616"/>
    </ligand>
</feature>
<dbReference type="EC" id="3.6.4.-"/>
<dbReference type="EC" id="2.1.1.-"/>
<dbReference type="EMBL" id="D28778">
    <property type="protein sequence ID" value="BAA21693.1"/>
    <property type="molecule type" value="Genomic_RNA"/>
</dbReference>
<dbReference type="SMR" id="O40976"/>
<dbReference type="Proteomes" id="UP000246397">
    <property type="component" value="Genome"/>
</dbReference>
<dbReference type="GO" id="GO:0044167">
    <property type="term" value="C:host cell endoplasmic reticulum membrane"/>
    <property type="evidence" value="ECO:0007669"/>
    <property type="project" value="UniProtKB-SubCell"/>
</dbReference>
<dbReference type="GO" id="GO:0016020">
    <property type="term" value="C:membrane"/>
    <property type="evidence" value="ECO:0007669"/>
    <property type="project" value="UniProtKB-KW"/>
</dbReference>
<dbReference type="GO" id="GO:0005524">
    <property type="term" value="F:ATP binding"/>
    <property type="evidence" value="ECO:0007669"/>
    <property type="project" value="UniProtKB-KW"/>
</dbReference>
<dbReference type="GO" id="GO:0004386">
    <property type="term" value="F:helicase activity"/>
    <property type="evidence" value="ECO:0007669"/>
    <property type="project" value="UniProtKB-KW"/>
</dbReference>
<dbReference type="GO" id="GO:0016817">
    <property type="term" value="F:hydrolase activity, acting on acid anhydrides"/>
    <property type="evidence" value="ECO:0007669"/>
    <property type="project" value="InterPro"/>
</dbReference>
<dbReference type="GO" id="GO:0008174">
    <property type="term" value="F:mRNA methyltransferase activity"/>
    <property type="evidence" value="ECO:0007669"/>
    <property type="project" value="InterPro"/>
</dbReference>
<dbReference type="GO" id="GO:0003723">
    <property type="term" value="F:RNA binding"/>
    <property type="evidence" value="ECO:0007669"/>
    <property type="project" value="InterPro"/>
</dbReference>
<dbReference type="GO" id="GO:0032259">
    <property type="term" value="P:methylation"/>
    <property type="evidence" value="ECO:0007669"/>
    <property type="project" value="UniProtKB-KW"/>
</dbReference>
<dbReference type="GO" id="GO:0016556">
    <property type="term" value="P:mRNA modification"/>
    <property type="evidence" value="ECO:0007669"/>
    <property type="project" value="InterPro"/>
</dbReference>
<dbReference type="GO" id="GO:0006396">
    <property type="term" value="P:RNA processing"/>
    <property type="evidence" value="ECO:0007669"/>
    <property type="project" value="InterPro"/>
</dbReference>
<dbReference type="Gene3D" id="3.40.50.300">
    <property type="entry name" value="P-loop containing nucleotide triphosphate hydrolases"/>
    <property type="match status" value="2"/>
</dbReference>
<dbReference type="InterPro" id="IPR027351">
    <property type="entry name" value="(+)RNA_virus_helicase_core_dom"/>
</dbReference>
<dbReference type="InterPro" id="IPR021002">
    <property type="entry name" value="1a_necrotic_phenotyp-det_dom"/>
</dbReference>
<dbReference type="InterPro" id="IPR002588">
    <property type="entry name" value="Alphavirus-like_MT_dom"/>
</dbReference>
<dbReference type="InterPro" id="IPR022184">
    <property type="entry name" value="CMV_1a_C"/>
</dbReference>
<dbReference type="InterPro" id="IPR027417">
    <property type="entry name" value="P-loop_NTPase"/>
</dbReference>
<dbReference type="Pfam" id="PF12467">
    <property type="entry name" value="CMV_1a"/>
    <property type="match status" value="1"/>
</dbReference>
<dbReference type="Pfam" id="PF12503">
    <property type="entry name" value="CMV_1a_C"/>
    <property type="match status" value="1"/>
</dbReference>
<dbReference type="Pfam" id="PF01443">
    <property type="entry name" value="Viral_helicase1"/>
    <property type="match status" value="1"/>
</dbReference>
<dbReference type="Pfam" id="PF01660">
    <property type="entry name" value="Vmethyltransf"/>
    <property type="match status" value="1"/>
</dbReference>
<dbReference type="SUPFAM" id="SSF52540">
    <property type="entry name" value="P-loop containing nucleoside triphosphate hydrolases"/>
    <property type="match status" value="1"/>
</dbReference>
<dbReference type="PROSITE" id="PS51743">
    <property type="entry name" value="ALPHAVIRUS_MT"/>
    <property type="match status" value="1"/>
</dbReference>
<dbReference type="PROSITE" id="PS51657">
    <property type="entry name" value="PSRV_HELICASE"/>
    <property type="match status" value="1"/>
</dbReference>
<comment type="function">
    <text evidence="1">Involved in the virus replication. Contains a helicase domain and a methyltransferase domain. The methyltransferase domain is probably involved in viral RNA capping. Involved in the formation of ER membrane spherular invaginations in which RNA replication complexes form (By similarity).</text>
</comment>
<comment type="subunit">
    <text evidence="1">Interacts with RNA-directed RNA polymerase 2a.</text>
</comment>
<comment type="subcellular location">
    <subcellularLocation>
        <location evidence="1">Host endoplasmic reticulum membrane</location>
        <topology evidence="1">Peripheral membrane protein</topology>
    </subcellularLocation>
</comment>
<comment type="similarity">
    <text evidence="5">Belongs to the bromoviridae replication protein 1a family.</text>
</comment>
<gene>
    <name type="ORF">ORF1a</name>
</gene>
<protein>
    <recommendedName>
        <fullName>Replication protein 1a</fullName>
    </recommendedName>
    <domain>
        <recommendedName>
            <fullName>ATP-dependent helicase</fullName>
            <ecNumber>3.6.4.-</ecNumber>
        </recommendedName>
    </domain>
    <domain>
        <recommendedName>
            <fullName>Methyltransferase</fullName>
            <ecNumber>2.1.1.-</ecNumber>
        </recommendedName>
    </domain>
</protein>